<keyword id="KW-0276">Fatty acid metabolism</keyword>
<keyword id="KW-0413">Isomerase</keyword>
<keyword id="KW-0442">Lipid degradation</keyword>
<keyword id="KW-0443">Lipid metabolism</keyword>
<keyword id="KW-0456">Lyase</keyword>
<keyword id="KW-0511">Multifunctional enzyme</keyword>
<keyword id="KW-0520">NAD</keyword>
<keyword id="KW-0560">Oxidoreductase</keyword>
<evidence type="ECO:0000255" key="1">
    <source>
        <dbReference type="HAMAP-Rule" id="MF_01621"/>
    </source>
</evidence>
<reference key="1">
    <citation type="journal article" date="2001" name="Mol. Microbiol.">
        <title>Two different pathways are involved in the beta-oxidation of n-alkanoic and n-phenylalkanoic acids in Pseudomonas putida U: genetic studies and biotechnological applications.</title>
        <authorList>
            <person name="Olivera E.R."/>
            <person name="Carnicero D."/>
            <person name="Garcia B."/>
            <person name="Minambres B."/>
            <person name="Moreno M.A."/>
            <person name="Canedo L."/>
            <person name="Dirusso C.C."/>
            <person name="Naharro G."/>
            <person name="Luengo J.M."/>
        </authorList>
    </citation>
    <scope>NUCLEOTIDE SEQUENCE [GENOMIC DNA]</scope>
    <source>
        <strain>U</strain>
    </source>
</reference>
<protein>
    <recommendedName>
        <fullName evidence="1">Fatty acid oxidation complex subunit alpha</fullName>
    </recommendedName>
    <domain>
        <recommendedName>
            <fullName evidence="1">Enoyl-CoA hydratase/Delta(3)-cis-Delta(2)-trans-enoyl-CoA isomerase/3-hydroxybutyryl-CoA epimerase</fullName>
            <ecNumber evidence="1">4.2.1.17</ecNumber>
            <ecNumber evidence="1">5.1.2.3</ecNumber>
            <ecNumber evidence="1">5.3.3.8</ecNumber>
        </recommendedName>
    </domain>
    <domain>
        <recommendedName>
            <fullName evidence="1">3-hydroxyacyl-CoA dehydrogenase</fullName>
            <ecNumber evidence="1">1.1.1.35</ecNumber>
        </recommendedName>
    </domain>
</protein>
<comment type="function">
    <text evidence="1">Involved in the aerobic and anaerobic degradation of long-chain fatty acids via beta-oxidation cycle. Catalyzes the formation of 3-oxoacyl-CoA from enoyl-CoA via L-3-hydroxyacyl-CoA. It can also use D-3-hydroxyacyl-CoA and cis-3-enoyl-CoA as substrate.</text>
</comment>
<comment type="catalytic activity">
    <reaction evidence="1">
        <text>a (3S)-3-hydroxyacyl-CoA + NAD(+) = a 3-oxoacyl-CoA + NADH + H(+)</text>
        <dbReference type="Rhea" id="RHEA:22432"/>
        <dbReference type="ChEBI" id="CHEBI:15378"/>
        <dbReference type="ChEBI" id="CHEBI:57318"/>
        <dbReference type="ChEBI" id="CHEBI:57540"/>
        <dbReference type="ChEBI" id="CHEBI:57945"/>
        <dbReference type="ChEBI" id="CHEBI:90726"/>
        <dbReference type="EC" id="1.1.1.35"/>
    </reaction>
</comment>
<comment type="catalytic activity">
    <reaction evidence="1">
        <text>a (3S)-3-hydroxyacyl-CoA = a (2E)-enoyl-CoA + H2O</text>
        <dbReference type="Rhea" id="RHEA:16105"/>
        <dbReference type="ChEBI" id="CHEBI:15377"/>
        <dbReference type="ChEBI" id="CHEBI:57318"/>
        <dbReference type="ChEBI" id="CHEBI:58856"/>
        <dbReference type="EC" id="4.2.1.17"/>
    </reaction>
</comment>
<comment type="catalytic activity">
    <reaction evidence="1">
        <text>a 4-saturated-(3S)-3-hydroxyacyl-CoA = a (3E)-enoyl-CoA + H2O</text>
        <dbReference type="Rhea" id="RHEA:20724"/>
        <dbReference type="ChEBI" id="CHEBI:15377"/>
        <dbReference type="ChEBI" id="CHEBI:58521"/>
        <dbReference type="ChEBI" id="CHEBI:137480"/>
        <dbReference type="EC" id="4.2.1.17"/>
    </reaction>
</comment>
<comment type="catalytic activity">
    <reaction evidence="1">
        <text>(3S)-3-hydroxybutanoyl-CoA = (3R)-3-hydroxybutanoyl-CoA</text>
        <dbReference type="Rhea" id="RHEA:21760"/>
        <dbReference type="ChEBI" id="CHEBI:57315"/>
        <dbReference type="ChEBI" id="CHEBI:57316"/>
        <dbReference type="EC" id="5.1.2.3"/>
    </reaction>
</comment>
<comment type="catalytic activity">
    <reaction evidence="1">
        <text>a (3Z)-enoyl-CoA = a 4-saturated (2E)-enoyl-CoA</text>
        <dbReference type="Rhea" id="RHEA:45900"/>
        <dbReference type="ChEBI" id="CHEBI:85097"/>
        <dbReference type="ChEBI" id="CHEBI:85489"/>
        <dbReference type="EC" id="5.3.3.8"/>
    </reaction>
</comment>
<comment type="catalytic activity">
    <reaction evidence="1">
        <text>a (3E)-enoyl-CoA = a 4-saturated (2E)-enoyl-CoA</text>
        <dbReference type="Rhea" id="RHEA:45228"/>
        <dbReference type="ChEBI" id="CHEBI:58521"/>
        <dbReference type="ChEBI" id="CHEBI:85097"/>
        <dbReference type="EC" id="5.3.3.8"/>
    </reaction>
</comment>
<comment type="pathway">
    <text evidence="1">Lipid metabolism; fatty acid beta-oxidation.</text>
</comment>
<comment type="subunit">
    <text evidence="1">Heterotetramer of two alpha chains (FadB) and two beta chains (FadA).</text>
</comment>
<comment type="similarity">
    <text evidence="1">In the N-terminal section; belongs to the enoyl-CoA hydratase/isomerase family.</text>
</comment>
<comment type="similarity">
    <text evidence="1">In the C-terminal section; belongs to the 3-hydroxyacyl-CoA dehydrogenase family.</text>
</comment>
<dbReference type="EC" id="4.2.1.17" evidence="1"/>
<dbReference type="EC" id="5.1.2.3" evidence="1"/>
<dbReference type="EC" id="5.3.3.8" evidence="1"/>
<dbReference type="EC" id="1.1.1.35" evidence="1"/>
<dbReference type="EMBL" id="AF290949">
    <property type="protein sequence ID" value="AAK18167.2"/>
    <property type="molecule type" value="Genomic_DNA"/>
</dbReference>
<dbReference type="RefSeq" id="WP_016500746.1">
    <property type="nucleotide sequence ID" value="NZ_WOWR01000052.1"/>
</dbReference>
<dbReference type="SMR" id="Q9AHY3"/>
<dbReference type="GeneID" id="45525198"/>
<dbReference type="eggNOG" id="COG1024">
    <property type="taxonomic scope" value="Bacteria"/>
</dbReference>
<dbReference type="eggNOG" id="COG1250">
    <property type="taxonomic scope" value="Bacteria"/>
</dbReference>
<dbReference type="UniPathway" id="UPA00659"/>
<dbReference type="GO" id="GO:0036125">
    <property type="term" value="C:fatty acid beta-oxidation multienzyme complex"/>
    <property type="evidence" value="ECO:0007669"/>
    <property type="project" value="InterPro"/>
</dbReference>
<dbReference type="GO" id="GO:0008692">
    <property type="term" value="F:3-hydroxybutyryl-CoA epimerase activity"/>
    <property type="evidence" value="ECO:0007669"/>
    <property type="project" value="UniProtKB-UniRule"/>
</dbReference>
<dbReference type="GO" id="GO:0004165">
    <property type="term" value="F:delta(3)-delta(2)-enoyl-CoA isomerase activity"/>
    <property type="evidence" value="ECO:0007669"/>
    <property type="project" value="UniProtKB-UniRule"/>
</dbReference>
<dbReference type="GO" id="GO:0004300">
    <property type="term" value="F:enoyl-CoA hydratase activity"/>
    <property type="evidence" value="ECO:0007669"/>
    <property type="project" value="UniProtKB-UniRule"/>
</dbReference>
<dbReference type="GO" id="GO:0016509">
    <property type="term" value="F:long-chain-3-hydroxyacyl-CoA dehydrogenase activity"/>
    <property type="evidence" value="ECO:0007669"/>
    <property type="project" value="TreeGrafter"/>
</dbReference>
<dbReference type="GO" id="GO:0070403">
    <property type="term" value="F:NAD+ binding"/>
    <property type="evidence" value="ECO:0007669"/>
    <property type="project" value="InterPro"/>
</dbReference>
<dbReference type="GO" id="GO:0006635">
    <property type="term" value="P:fatty acid beta-oxidation"/>
    <property type="evidence" value="ECO:0007669"/>
    <property type="project" value="UniProtKB-UniRule"/>
</dbReference>
<dbReference type="CDD" id="cd06558">
    <property type="entry name" value="crotonase-like"/>
    <property type="match status" value="1"/>
</dbReference>
<dbReference type="FunFam" id="1.10.1040.50:FF:000001">
    <property type="entry name" value="Fatty acid oxidation complex subunit alpha"/>
    <property type="match status" value="1"/>
</dbReference>
<dbReference type="FunFam" id="3.90.226.10:FF:000018">
    <property type="entry name" value="Fatty acid oxidation complex subunit alpha"/>
    <property type="match status" value="1"/>
</dbReference>
<dbReference type="FunFam" id="3.40.50.720:FF:000009">
    <property type="entry name" value="Fatty oxidation complex, alpha subunit"/>
    <property type="match status" value="1"/>
</dbReference>
<dbReference type="Gene3D" id="1.10.1040.50">
    <property type="match status" value="1"/>
</dbReference>
<dbReference type="Gene3D" id="3.90.226.10">
    <property type="entry name" value="2-enoyl-CoA Hydratase, Chain A, domain 1"/>
    <property type="match status" value="1"/>
</dbReference>
<dbReference type="Gene3D" id="3.40.50.720">
    <property type="entry name" value="NAD(P)-binding Rossmann-like Domain"/>
    <property type="match status" value="1"/>
</dbReference>
<dbReference type="HAMAP" id="MF_01621">
    <property type="entry name" value="FadB"/>
    <property type="match status" value="1"/>
</dbReference>
<dbReference type="InterPro" id="IPR006180">
    <property type="entry name" value="3-OHacyl-CoA_DH_CS"/>
</dbReference>
<dbReference type="InterPro" id="IPR006176">
    <property type="entry name" value="3-OHacyl-CoA_DH_NAD-bd"/>
</dbReference>
<dbReference type="InterPro" id="IPR006108">
    <property type="entry name" value="3HC_DH_C"/>
</dbReference>
<dbReference type="InterPro" id="IPR008927">
    <property type="entry name" value="6-PGluconate_DH-like_C_sf"/>
</dbReference>
<dbReference type="InterPro" id="IPR029045">
    <property type="entry name" value="ClpP/crotonase-like_dom_sf"/>
</dbReference>
<dbReference type="InterPro" id="IPR018376">
    <property type="entry name" value="Enoyl-CoA_hyd/isom_CS"/>
</dbReference>
<dbReference type="InterPro" id="IPR001753">
    <property type="entry name" value="Enoyl-CoA_hydra/iso"/>
</dbReference>
<dbReference type="InterPro" id="IPR050136">
    <property type="entry name" value="FA_oxidation_alpha_subunit"/>
</dbReference>
<dbReference type="InterPro" id="IPR012799">
    <property type="entry name" value="FadB"/>
</dbReference>
<dbReference type="InterPro" id="IPR036291">
    <property type="entry name" value="NAD(P)-bd_dom_sf"/>
</dbReference>
<dbReference type="NCBIfam" id="TIGR02437">
    <property type="entry name" value="FadB"/>
    <property type="match status" value="1"/>
</dbReference>
<dbReference type="NCBIfam" id="NF008727">
    <property type="entry name" value="PRK11730.1"/>
    <property type="match status" value="1"/>
</dbReference>
<dbReference type="PANTHER" id="PTHR43612">
    <property type="entry name" value="TRIFUNCTIONAL ENZYME SUBUNIT ALPHA"/>
    <property type="match status" value="1"/>
</dbReference>
<dbReference type="PANTHER" id="PTHR43612:SF3">
    <property type="entry name" value="TRIFUNCTIONAL ENZYME SUBUNIT ALPHA, MITOCHONDRIAL"/>
    <property type="match status" value="1"/>
</dbReference>
<dbReference type="Pfam" id="PF00725">
    <property type="entry name" value="3HCDH"/>
    <property type="match status" value="1"/>
</dbReference>
<dbReference type="Pfam" id="PF02737">
    <property type="entry name" value="3HCDH_N"/>
    <property type="match status" value="1"/>
</dbReference>
<dbReference type="Pfam" id="PF00378">
    <property type="entry name" value="ECH_1"/>
    <property type="match status" value="1"/>
</dbReference>
<dbReference type="SUPFAM" id="SSF48179">
    <property type="entry name" value="6-phosphogluconate dehydrogenase C-terminal domain-like"/>
    <property type="match status" value="2"/>
</dbReference>
<dbReference type="SUPFAM" id="SSF52096">
    <property type="entry name" value="ClpP/crotonase"/>
    <property type="match status" value="1"/>
</dbReference>
<dbReference type="SUPFAM" id="SSF51735">
    <property type="entry name" value="NAD(P)-binding Rossmann-fold domains"/>
    <property type="match status" value="1"/>
</dbReference>
<dbReference type="PROSITE" id="PS00067">
    <property type="entry name" value="3HCDH"/>
    <property type="match status" value="1"/>
</dbReference>
<dbReference type="PROSITE" id="PS00166">
    <property type="entry name" value="ENOYL_COA_HYDRATASE"/>
    <property type="match status" value="1"/>
</dbReference>
<organism>
    <name type="scientific">Pseudomonas putida</name>
    <name type="common">Arthrobacter siderocapsulatus</name>
    <dbReference type="NCBI Taxonomy" id="303"/>
    <lineage>
        <taxon>Bacteria</taxon>
        <taxon>Pseudomonadati</taxon>
        <taxon>Pseudomonadota</taxon>
        <taxon>Gammaproteobacteria</taxon>
        <taxon>Pseudomonadales</taxon>
        <taxon>Pseudomonadaceae</taxon>
        <taxon>Pseudomonas</taxon>
    </lineage>
</organism>
<feature type="chain" id="PRO_0000109278" description="Fatty acid oxidation complex subunit alpha">
    <location>
        <begin position="1"/>
        <end position="715"/>
    </location>
</feature>
<feature type="region of interest" description="Enoyl-CoA hydratase/isomerase" evidence="1">
    <location>
        <begin position="1"/>
        <end position="190"/>
    </location>
</feature>
<feature type="region of interest" description="3-hydroxyacyl-CoA dehydrogenase" evidence="1">
    <location>
        <begin position="312"/>
        <end position="715"/>
    </location>
</feature>
<feature type="active site" description="For 3-hydroxyacyl-CoA dehydrogenase activity" evidence="1">
    <location>
        <position position="451"/>
    </location>
</feature>
<feature type="binding site" evidence="1">
    <location>
        <position position="297"/>
    </location>
    <ligand>
        <name>substrate</name>
    </ligand>
</feature>
<feature type="binding site" evidence="1">
    <location>
        <position position="325"/>
    </location>
    <ligand>
        <name>NAD(+)</name>
        <dbReference type="ChEBI" id="CHEBI:57540"/>
    </ligand>
</feature>
<feature type="binding site" evidence="1">
    <location>
        <position position="344"/>
    </location>
    <ligand>
        <name>NAD(+)</name>
        <dbReference type="ChEBI" id="CHEBI:57540"/>
    </ligand>
</feature>
<feature type="binding site" evidence="1">
    <location>
        <begin position="401"/>
        <end position="403"/>
    </location>
    <ligand>
        <name>NAD(+)</name>
        <dbReference type="ChEBI" id="CHEBI:57540"/>
    </ligand>
</feature>
<feature type="binding site" evidence="1">
    <location>
        <position position="408"/>
    </location>
    <ligand>
        <name>NAD(+)</name>
        <dbReference type="ChEBI" id="CHEBI:57540"/>
    </ligand>
</feature>
<feature type="binding site" evidence="1">
    <location>
        <position position="430"/>
    </location>
    <ligand>
        <name>NAD(+)</name>
        <dbReference type="ChEBI" id="CHEBI:57540"/>
    </ligand>
</feature>
<feature type="binding site" evidence="1">
    <location>
        <position position="454"/>
    </location>
    <ligand>
        <name>NAD(+)</name>
        <dbReference type="ChEBI" id="CHEBI:57540"/>
    </ligand>
</feature>
<feature type="binding site" evidence="1">
    <location>
        <position position="501"/>
    </location>
    <ligand>
        <name>substrate</name>
    </ligand>
</feature>
<feature type="binding site" evidence="1">
    <location>
        <position position="660"/>
    </location>
    <ligand>
        <name>substrate</name>
    </ligand>
</feature>
<feature type="site" description="Important for catalytic activity" evidence="1">
    <location>
        <position position="120"/>
    </location>
</feature>
<feature type="site" description="Important for catalytic activity" evidence="1">
    <location>
        <position position="140"/>
    </location>
</feature>
<sequence>MIYEGKAITVKALESGIVELKFDLKGESVNKFNRLTLNELRQAVDAIKADASVKGVIVSSGKDVFIVGADITEFVDNFKLPEAELVAGNLEANRIFSAFEDLEVPTVAAINGIALGGGLEMCLAADYRVMSTSAKIGLPEVKLGIYPGFGGTVRLPRLIGSDNAVEWIASGKENRAEDALKVGAVDAVVAPELLQAGALDLIKRAISGELDYKAKRQPKLEKLKLNAIEQMMAFETAKGFVAGQAGPNYPAPVEAIKTIQKAANFGRDKALEVEAAGFAKLAKTSVAESLIGLFLNDQELKRKAKAHDEIAHDVKQAAVLGAGIMGGGIAYQSAVKGTPILMKDIREEAIQLGLNEASKLLGNRVDKGRLTPAKMAEALNAIRPTLSYGDFANVDIVVEAVVENPKVKQAVLAEVEGQVKEDAILASNTSTISINLLAKALKRPENFVGMHFFNPVHMMPLVEVIRGEKSSEVAVATTVAYAKKMGKNPIVVNDCPGFLVNRVLFPYFGGFAKLVSAGVDFVRIDKVMEKFGWPMGPAYLMDVVGIDTGHHGRDVMAEGFPDRMKDERRSAVDALYEANRLGQKNGKGFYAYETDKRGKPKKVFDAAVLDVLKPIVFEQREVTDEDIINWMMVPLCLETVRCLEDGIVETAAEADMGLVYGIGFPPFRGGALRYIDSIGVAEFVALADQYADLGPLYHPTAKLREMAKNGQRFFN</sequence>
<proteinExistence type="inferred from homology"/>
<name>FADB_PSEPU</name>
<gene>
    <name evidence="1" type="primary">fadB</name>
</gene>
<accession>Q9AHY3</accession>